<feature type="chain" id="PRO_0000084502" description="LAS seventeen-binding protein 5">
    <location>
        <begin position="1"/>
        <end position="354"/>
    </location>
</feature>
<feature type="domain" description="VHS">
    <location>
        <begin position="15"/>
        <end position="161"/>
    </location>
</feature>
<feature type="region of interest" description="Disordered" evidence="1">
    <location>
        <begin position="160"/>
        <end position="184"/>
    </location>
</feature>
<feature type="region of interest" description="Disordered" evidence="1">
    <location>
        <begin position="296"/>
        <end position="354"/>
    </location>
</feature>
<feature type="compositionally biased region" description="Basic and acidic residues" evidence="1">
    <location>
        <begin position="296"/>
        <end position="310"/>
    </location>
</feature>
<protein>
    <recommendedName>
        <fullName>LAS seventeen-binding protein 5</fullName>
        <shortName>LAS17-binding protein 5</shortName>
    </recommendedName>
</protein>
<gene>
    <name type="primary">LSB5</name>
    <name type="ordered locus">YCL034W</name>
    <name type="ORF">YCL186</name>
    <name type="ORF">YCL34W</name>
</gene>
<dbReference type="EMBL" id="X59720">
    <property type="protein sequence ID" value="CAC42957.1"/>
    <property type="molecule type" value="Genomic_DNA"/>
</dbReference>
<dbReference type="EMBL" id="BK006937">
    <property type="protein sequence ID" value="DAA07450.1"/>
    <property type="molecule type" value="Genomic_DNA"/>
</dbReference>
<dbReference type="PIR" id="S74282">
    <property type="entry name" value="S74282"/>
</dbReference>
<dbReference type="RefSeq" id="NP_009896.2">
    <property type="nucleotide sequence ID" value="NM_001178679.1"/>
</dbReference>
<dbReference type="SMR" id="P25369"/>
<dbReference type="BioGRID" id="30949">
    <property type="interactions" value="51"/>
</dbReference>
<dbReference type="DIP" id="DIP-6258N"/>
<dbReference type="FunCoup" id="P25369">
    <property type="interactions" value="38"/>
</dbReference>
<dbReference type="IntAct" id="P25369">
    <property type="interactions" value="13"/>
</dbReference>
<dbReference type="MINT" id="P25369"/>
<dbReference type="STRING" id="4932.YCL034W"/>
<dbReference type="iPTMnet" id="P25369"/>
<dbReference type="PaxDb" id="4932-YCL034W"/>
<dbReference type="PeptideAtlas" id="P25369"/>
<dbReference type="EnsemblFungi" id="YCL034W_mRNA">
    <property type="protein sequence ID" value="YCL034W"/>
    <property type="gene ID" value="YCL034W"/>
</dbReference>
<dbReference type="GeneID" id="850323"/>
<dbReference type="KEGG" id="sce:YCL034W"/>
<dbReference type="AGR" id="SGD:S000000539"/>
<dbReference type="SGD" id="S000000539">
    <property type="gene designation" value="LSB5"/>
</dbReference>
<dbReference type="VEuPathDB" id="FungiDB:YCL034W"/>
<dbReference type="eggNOG" id="ENOG502QR8R">
    <property type="taxonomic scope" value="Eukaryota"/>
</dbReference>
<dbReference type="HOGENOM" id="CLU_036827_2_0_1"/>
<dbReference type="InParanoid" id="P25369"/>
<dbReference type="OMA" id="YGSVHRQ"/>
<dbReference type="OrthoDB" id="10068368at2759"/>
<dbReference type="BioCyc" id="YEAST:G3O-29294-MONOMER"/>
<dbReference type="BioGRID-ORCS" id="850323">
    <property type="hits" value="0 hits in 10 CRISPR screens"/>
</dbReference>
<dbReference type="PRO" id="PR:P25369"/>
<dbReference type="Proteomes" id="UP000002311">
    <property type="component" value="Chromosome III"/>
</dbReference>
<dbReference type="RNAct" id="P25369">
    <property type="molecule type" value="protein"/>
</dbReference>
<dbReference type="GO" id="GO:0030479">
    <property type="term" value="C:actin cortical patch"/>
    <property type="evidence" value="ECO:0000314"/>
    <property type="project" value="SGD"/>
</dbReference>
<dbReference type="GO" id="GO:0005938">
    <property type="term" value="C:cell cortex"/>
    <property type="evidence" value="ECO:0000314"/>
    <property type="project" value="SGD"/>
</dbReference>
<dbReference type="GO" id="GO:0005737">
    <property type="term" value="C:cytoplasm"/>
    <property type="evidence" value="ECO:0000314"/>
    <property type="project" value="SGD"/>
</dbReference>
<dbReference type="GO" id="GO:0005829">
    <property type="term" value="C:cytosol"/>
    <property type="evidence" value="ECO:0007005"/>
    <property type="project" value="SGD"/>
</dbReference>
<dbReference type="GO" id="GO:0051666">
    <property type="term" value="P:actin cortical patch localization"/>
    <property type="evidence" value="ECO:0000316"/>
    <property type="project" value="SGD"/>
</dbReference>
<dbReference type="GO" id="GO:0030036">
    <property type="term" value="P:actin cytoskeleton organization"/>
    <property type="evidence" value="ECO:0000316"/>
    <property type="project" value="SGD"/>
</dbReference>
<dbReference type="GO" id="GO:0007015">
    <property type="term" value="P:actin filament organization"/>
    <property type="evidence" value="ECO:0000353"/>
    <property type="project" value="SGD"/>
</dbReference>
<dbReference type="GO" id="GO:0006897">
    <property type="term" value="P:endocytosis"/>
    <property type="evidence" value="ECO:0000316"/>
    <property type="project" value="SGD"/>
</dbReference>
<dbReference type="CDD" id="cd14232">
    <property type="entry name" value="GAT_LSB5"/>
    <property type="match status" value="1"/>
</dbReference>
<dbReference type="CDD" id="cd16980">
    <property type="entry name" value="VHS_Lsb5"/>
    <property type="match status" value="1"/>
</dbReference>
<dbReference type="FunFam" id="1.25.40.90:FF:000046">
    <property type="entry name" value="LSB5p protein"/>
    <property type="match status" value="1"/>
</dbReference>
<dbReference type="Gene3D" id="1.25.40.90">
    <property type="match status" value="1"/>
</dbReference>
<dbReference type="InterPro" id="IPR008942">
    <property type="entry name" value="ENTH_VHS"/>
</dbReference>
<dbReference type="InterPro" id="IPR044103">
    <property type="entry name" value="GAT_LSB5"/>
</dbReference>
<dbReference type="InterPro" id="IPR045007">
    <property type="entry name" value="LSB5"/>
</dbReference>
<dbReference type="PANTHER" id="PTHR47789">
    <property type="entry name" value="LAS SEVENTEEN-BINDING PROTEIN 5"/>
    <property type="match status" value="1"/>
</dbReference>
<dbReference type="PANTHER" id="PTHR47789:SF1">
    <property type="entry name" value="LAS SEVENTEEN-BINDING PROTEIN 5"/>
    <property type="match status" value="1"/>
</dbReference>
<dbReference type="SUPFAM" id="SSF48464">
    <property type="entry name" value="ENTH/VHS domain"/>
    <property type="match status" value="1"/>
</dbReference>
<dbReference type="SUPFAM" id="SSF89009">
    <property type="entry name" value="GAT-like domain"/>
    <property type="match status" value="1"/>
</dbReference>
<proteinExistence type="evidence at protein level"/>
<comment type="function">
    <text evidence="3">Essential for the organization of the actin cytoskeleton, fluid phase endocytosis and vesicle trafficking, together with YSC84.</text>
</comment>
<comment type="subunit">
    <text evidence="2 3">Interacts with SLA1 and LAS17.</text>
</comment>
<comment type="interaction">
    <interactant intactId="EBI-10218">
        <id>P25369</id>
    </interactant>
    <interactant intactId="EBI-2824">
        <id>P40994</id>
        <label>ARF3</label>
    </interactant>
    <organismsDiffer>false</organismsDiffer>
    <experiments>2</experiments>
</comment>
<comment type="interaction">
    <interactant intactId="EBI-10218">
        <id>P25369</id>
    </interactant>
    <interactant intactId="EBI-10022">
        <id>Q12446</id>
        <label>LAS17</label>
    </interactant>
    <organismsDiffer>false</organismsDiffer>
    <experiments>3</experiments>
</comment>
<comment type="interaction">
    <interactant intactId="EBI-10218">
        <id>P25369</id>
    </interactant>
    <interactant intactId="EBI-17313">
        <id>P32790</id>
        <label>SLA1</label>
    </interactant>
    <organismsDiffer>false</organismsDiffer>
    <experiments>5</experiments>
</comment>
<comment type="subcellular location">
    <subcellularLocation>
        <location evidence="3">Cytoplasm</location>
        <location evidence="3">Cell cortex</location>
    </subcellularLocation>
    <subcellularLocation>
        <location evidence="3">Cytoplasm</location>
        <location evidence="3">Cytoskeleton</location>
    </subcellularLocation>
    <text>Localizes independently of F-actin.</text>
</comment>
<comment type="similarity">
    <text evidence="4">Belongs to the LSB5 family.</text>
</comment>
<name>LSB5_YEAST</name>
<accession>P25369</accession>
<accession>D6VQY1</accession>
<accession>P87004</accession>
<accession>Q8NIM9</accession>
<organism>
    <name type="scientific">Saccharomyces cerevisiae (strain ATCC 204508 / S288c)</name>
    <name type="common">Baker's yeast</name>
    <dbReference type="NCBI Taxonomy" id="559292"/>
    <lineage>
        <taxon>Eukaryota</taxon>
        <taxon>Fungi</taxon>
        <taxon>Dikarya</taxon>
        <taxon>Ascomycota</taxon>
        <taxon>Saccharomycotina</taxon>
        <taxon>Saccharomycetes</taxon>
        <taxon>Saccharomycetales</taxon>
        <taxon>Saccharomycetaceae</taxon>
        <taxon>Saccharomyces</taxon>
    </lineage>
</organism>
<evidence type="ECO:0000256" key="1">
    <source>
        <dbReference type="SAM" id="MobiDB-lite"/>
    </source>
</evidence>
<evidence type="ECO:0000269" key="2">
    <source>
    </source>
</evidence>
<evidence type="ECO:0000269" key="3">
    <source>
    </source>
</evidence>
<evidence type="ECO:0000305" key="4"/>
<reference key="1">
    <citation type="journal article" date="1991" name="Yeast">
        <title>The complete sequence of a 11,953 bp fragment from C1G on chromosome III encompasses four new open reading frames.</title>
        <authorList>
            <person name="Rad M.R."/>
            <person name="Luetzenkirchen K."/>
            <person name="Xu G."/>
            <person name="Kleinhans U."/>
            <person name="Hollenberg C.P."/>
        </authorList>
    </citation>
    <scope>NUCLEOTIDE SEQUENCE [GENOMIC DNA]</scope>
</reference>
<reference key="2">
    <citation type="journal article" date="1992" name="Nature">
        <title>The complete DNA sequence of yeast chromosome III.</title>
        <authorList>
            <person name="Oliver S.G."/>
            <person name="van der Aart Q.J.M."/>
            <person name="Agostoni-Carbone M.L."/>
            <person name="Aigle M."/>
            <person name="Alberghina L."/>
            <person name="Alexandraki D."/>
            <person name="Antoine G."/>
            <person name="Anwar R."/>
            <person name="Ballesta J.P.G."/>
            <person name="Benit P."/>
            <person name="Berben G."/>
            <person name="Bergantino E."/>
            <person name="Biteau N."/>
            <person name="Bolle P.-A."/>
            <person name="Bolotin-Fukuhara M."/>
            <person name="Brown A."/>
            <person name="Brown A.J.P."/>
            <person name="Buhler J.-M."/>
            <person name="Carcano C."/>
            <person name="Carignani G."/>
            <person name="Cederberg H."/>
            <person name="Chanet R."/>
            <person name="Contreras R."/>
            <person name="Crouzet M."/>
            <person name="Daignan-Fornier B."/>
            <person name="Defoor E."/>
            <person name="Delgado M.D."/>
            <person name="Demolder J."/>
            <person name="Doira C."/>
            <person name="Dubois E."/>
            <person name="Dujon B."/>
            <person name="Duesterhoeft A."/>
            <person name="Erdmann D."/>
            <person name="Esteban M."/>
            <person name="Fabre F."/>
            <person name="Fairhead C."/>
            <person name="Faye G."/>
            <person name="Feldmann H."/>
            <person name="Fiers W."/>
            <person name="Francingues-Gaillard M.-C."/>
            <person name="Franco L."/>
            <person name="Frontali L."/>
            <person name="Fukuhara H."/>
            <person name="Fuller L.J."/>
            <person name="Galland P."/>
            <person name="Gent M.E."/>
            <person name="Gigot D."/>
            <person name="Gilliquet V."/>
            <person name="Glansdorff N."/>
            <person name="Goffeau A."/>
            <person name="Grenson M."/>
            <person name="Grisanti P."/>
            <person name="Grivell L.A."/>
            <person name="de Haan M."/>
            <person name="Haasemann M."/>
            <person name="Hatat D."/>
            <person name="Hoenicka J."/>
            <person name="Hegemann J.H."/>
            <person name="Herbert C.J."/>
            <person name="Hilger F."/>
            <person name="Hohmann S."/>
            <person name="Hollenberg C.P."/>
            <person name="Huse K."/>
            <person name="Iborra F."/>
            <person name="Indge K.J."/>
            <person name="Isono K."/>
            <person name="Jacq C."/>
            <person name="Jacquet M."/>
            <person name="James C.M."/>
            <person name="Jauniaux J.-C."/>
            <person name="Jia Y."/>
            <person name="Jimenez A."/>
            <person name="Kelly A."/>
            <person name="Kleinhans U."/>
            <person name="Kreisl P."/>
            <person name="Lanfranchi G."/>
            <person name="Lewis C."/>
            <person name="van der Linden C.G."/>
            <person name="Lucchini G."/>
            <person name="Lutzenkirchen K."/>
            <person name="Maat M.J."/>
            <person name="Mallet L."/>
            <person name="Mannhaupt G."/>
            <person name="Martegani E."/>
            <person name="Mathieu A."/>
            <person name="Maurer C.T.C."/>
            <person name="McConnell D."/>
            <person name="McKee R.A."/>
            <person name="Messenguy F."/>
            <person name="Mewes H.-W."/>
            <person name="Molemans F."/>
            <person name="Montague M.A."/>
            <person name="Muzi Falconi M."/>
            <person name="Navas L."/>
            <person name="Newlon C.S."/>
            <person name="Noone D."/>
            <person name="Pallier C."/>
            <person name="Panzeri L."/>
            <person name="Pearson B.M."/>
            <person name="Perea J."/>
            <person name="Philippsen P."/>
            <person name="Pierard A."/>
            <person name="Planta R.J."/>
            <person name="Plevani P."/>
            <person name="Poetsch B."/>
            <person name="Pohl F.M."/>
            <person name="Purnelle B."/>
            <person name="Ramezani Rad M."/>
            <person name="Rasmussen S.W."/>
            <person name="Raynal A."/>
            <person name="Remacha M.A."/>
            <person name="Richterich P."/>
            <person name="Roberts A.B."/>
            <person name="Rodriguez F."/>
            <person name="Sanz E."/>
            <person name="Schaaff-Gerstenschlaeger I."/>
            <person name="Scherens B."/>
            <person name="Schweitzer B."/>
            <person name="Shu Y."/>
            <person name="Skala J."/>
            <person name="Slonimski P.P."/>
            <person name="Sor F."/>
            <person name="Soustelle C."/>
            <person name="Spiegelberg R."/>
            <person name="Stateva L.I."/>
            <person name="Steensma H.Y."/>
            <person name="Steiner S."/>
            <person name="Thierry A."/>
            <person name="Thireos G."/>
            <person name="Tzermia M."/>
            <person name="Urrestarazu L.A."/>
            <person name="Valle G."/>
            <person name="Vetter I."/>
            <person name="van Vliet-Reedijk J.C."/>
            <person name="Voet M."/>
            <person name="Volckaert G."/>
            <person name="Vreken P."/>
            <person name="Wang H."/>
            <person name="Warmington J.R."/>
            <person name="von Wettstein D."/>
            <person name="Wicksteed B.L."/>
            <person name="Wilson C."/>
            <person name="Wurst H."/>
            <person name="Xu G."/>
            <person name="Yoshikawa A."/>
            <person name="Zimmermann F.K."/>
            <person name="Sgouros J.G."/>
        </authorList>
    </citation>
    <scope>NUCLEOTIDE SEQUENCE [LARGE SCALE GENOMIC DNA]</scope>
    <source>
        <strain>ATCC 204508 / S288c</strain>
    </source>
</reference>
<reference key="3">
    <citation type="submission" date="1996-01" db="EMBL/GenBank/DDBJ databases">
        <authorList>
            <person name="Gromadka R."/>
        </authorList>
    </citation>
    <scope>SEQUENCE REVISION</scope>
</reference>
<reference key="4">
    <citation type="submission" date="2001-06" db="EMBL/GenBank/DDBJ databases">
        <authorList>
            <person name="Valles G."/>
            <person name="Volckaerts G."/>
        </authorList>
    </citation>
    <scope>SEQUENCE REVISION</scope>
</reference>
<reference key="5">
    <citation type="journal article" date="2014" name="G3 (Bethesda)">
        <title>The reference genome sequence of Saccharomyces cerevisiae: Then and now.</title>
        <authorList>
            <person name="Engel S.R."/>
            <person name="Dietrich F.S."/>
            <person name="Fisk D.G."/>
            <person name="Binkley G."/>
            <person name="Balakrishnan R."/>
            <person name="Costanzo M.C."/>
            <person name="Dwight S.S."/>
            <person name="Hitz B.C."/>
            <person name="Karra K."/>
            <person name="Nash R.S."/>
            <person name="Weng S."/>
            <person name="Wong E.D."/>
            <person name="Lloyd P."/>
            <person name="Skrzypek M.S."/>
            <person name="Miyasato S.R."/>
            <person name="Simison M."/>
            <person name="Cherry J.M."/>
        </authorList>
    </citation>
    <scope>GENOME REANNOTATION</scope>
    <source>
        <strain>ATCC 204508 / S288c</strain>
    </source>
</reference>
<reference key="6">
    <citation type="journal article" date="2002" name="Mol. Biol. Cell">
        <title>Novel proteins linking the actin cytoskeleton to the endocytic machinery in Saccharomyces cerevisiae.</title>
        <authorList>
            <person name="Dewar H."/>
            <person name="Warren D.T."/>
            <person name="Gardiner F.C."/>
            <person name="Gourlay C.G."/>
            <person name="Satish N."/>
            <person name="Richardson M.R."/>
            <person name="Andrews P.D."/>
            <person name="Ayscough K.R."/>
        </authorList>
    </citation>
    <scope>PARTIAL NUCLEOTIDE SEQUENCE</scope>
    <scope>FUNCTION</scope>
    <scope>INTERACTION WITH SLA1</scope>
    <scope>SUBCELLULAR LOCATION</scope>
</reference>
<reference key="7">
    <citation type="journal article" date="1999" name="Mol. Biol. Cell">
        <title>The Saccharomyces cerevisiae homologue of human Wiskott-Aldrich syndrome protein Las17p interacts with the Arp2/3 complex.</title>
        <authorList>
            <person name="Madania A."/>
            <person name="Dumoulin P."/>
            <person name="Grava S."/>
            <person name="Kitamoto H."/>
            <person name="Scharer-Brodbeck C."/>
            <person name="Soulard A."/>
            <person name="Moreau V."/>
            <person name="Winsor B."/>
        </authorList>
    </citation>
    <scope>INTERACTION WITH LAS17</scope>
</reference>
<reference key="8">
    <citation type="journal article" date="2008" name="Mol. Cell. Proteomics">
        <title>A multidimensional chromatography technology for in-depth phosphoproteome analysis.</title>
        <authorList>
            <person name="Albuquerque C.P."/>
            <person name="Smolka M.B."/>
            <person name="Payne S.H."/>
            <person name="Bafna V."/>
            <person name="Eng J."/>
            <person name="Zhou H."/>
        </authorList>
    </citation>
    <scope>IDENTIFICATION BY MASS SPECTROMETRY [LARGE SCALE ANALYSIS]</scope>
</reference>
<reference key="9">
    <citation type="journal article" date="2009" name="Science">
        <title>Global analysis of Cdk1 substrate phosphorylation sites provides insights into evolution.</title>
        <authorList>
            <person name="Holt L.J."/>
            <person name="Tuch B.B."/>
            <person name="Villen J."/>
            <person name="Johnson A.D."/>
            <person name="Gygi S.P."/>
            <person name="Morgan D.O."/>
        </authorList>
    </citation>
    <scope>IDENTIFICATION BY MASS SPECTROMETRY [LARGE SCALE ANALYSIS]</scope>
</reference>
<sequence length="354" mass="39872">MGFLSDHPHTAITETIFRIVSSRDYTLEVELAPLIQLIKADHNDYNYTVNQEEAARALRKKIKYGNRLQQSRTLDLLDLFISQGVKFTVMYNDDKLLQRLRGMATNSENSGSGEKYEPRIIKKCAAYAISWLNYITQNNLENARAYSGLYQLGQTVKQRYSKSSRSRRSGGGSGGRSNFMDDSADDTLYQSNSLTSADRLYRIPQINMNKEAPRIRLIISDALASAVSLQNSLIGLPKGKFSTDDEEATSKFIQARAIRRKVLRYLQLVTEGEFLGSLIHANDELVAALTAYDDRSAQDDSSDESDHGSYDDGIYDENEQDNSRYIDSESSEEESLSSYQPSTISNPFGDHNKI</sequence>
<keyword id="KW-0963">Cytoplasm</keyword>
<keyword id="KW-0206">Cytoskeleton</keyword>
<keyword id="KW-0254">Endocytosis</keyword>
<keyword id="KW-1185">Reference proteome</keyword>